<gene>
    <name type="primary">DHFR</name>
</gene>
<feature type="chain" id="PRO_0000186365" description="Dihydrofolate reductase">
    <location>
        <begin position="1"/>
        <end position="186"/>
    </location>
</feature>
<feature type="domain" description="DHFR" evidence="3">
    <location>
        <begin position="3"/>
        <end position="184"/>
    </location>
</feature>
<feature type="binding site" evidence="1">
    <location>
        <position position="9"/>
    </location>
    <ligand>
        <name>NADP(+)</name>
        <dbReference type="ChEBI" id="CHEBI:58349"/>
    </ligand>
</feature>
<feature type="binding site" evidence="1">
    <location>
        <begin position="15"/>
        <end position="21"/>
    </location>
    <ligand>
        <name>NADP(+)</name>
        <dbReference type="ChEBI" id="CHEBI:58349"/>
    </ligand>
</feature>
<feature type="binding site" evidence="1">
    <location>
        <begin position="30"/>
        <end position="35"/>
    </location>
    <ligand>
        <name>substrate</name>
    </ligand>
</feature>
<feature type="binding site" evidence="1">
    <location>
        <begin position="54"/>
        <end position="56"/>
    </location>
    <ligand>
        <name>NADP(+)</name>
        <dbReference type="ChEBI" id="CHEBI:58349"/>
    </ligand>
</feature>
<feature type="binding site" evidence="1">
    <location>
        <position position="70"/>
    </location>
    <ligand>
        <name>substrate</name>
    </ligand>
</feature>
<feature type="binding site" evidence="1">
    <location>
        <begin position="76"/>
        <end position="78"/>
    </location>
    <ligand>
        <name>NADP(+)</name>
        <dbReference type="ChEBI" id="CHEBI:58349"/>
    </ligand>
</feature>
<feature type="binding site" evidence="1">
    <location>
        <begin position="116"/>
        <end position="123"/>
    </location>
    <ligand>
        <name>NADP(+)</name>
        <dbReference type="ChEBI" id="CHEBI:58349"/>
    </ligand>
</feature>
<feature type="modified residue" description="N6-acetyllysine; alternate" evidence="2">
    <location>
        <position position="32"/>
    </location>
</feature>
<feature type="modified residue" description="N6-succinyllysine; alternate" evidence="2">
    <location>
        <position position="32"/>
    </location>
</feature>
<feature type="modified residue" description="Cysteine derivative; partial">
    <location>
        <position position="162"/>
    </location>
</feature>
<protein>
    <recommendedName>
        <fullName>Dihydrofolate reductase</fullName>
        <ecNumber>1.5.1.3</ecNumber>
    </recommendedName>
</protein>
<evidence type="ECO:0000250" key="1">
    <source>
        <dbReference type="UniProtKB" id="P00374"/>
    </source>
</evidence>
<evidence type="ECO:0000250" key="2">
    <source>
        <dbReference type="UniProtKB" id="P00375"/>
    </source>
</evidence>
<evidence type="ECO:0000255" key="3">
    <source>
        <dbReference type="PROSITE-ProRule" id="PRU00660"/>
    </source>
</evidence>
<evidence type="ECO:0000305" key="4"/>
<organism>
    <name type="scientific">Sus scrofa</name>
    <name type="common">Pig</name>
    <dbReference type="NCBI Taxonomy" id="9823"/>
    <lineage>
        <taxon>Eukaryota</taxon>
        <taxon>Metazoa</taxon>
        <taxon>Chordata</taxon>
        <taxon>Craniata</taxon>
        <taxon>Vertebrata</taxon>
        <taxon>Euteleostomi</taxon>
        <taxon>Mammalia</taxon>
        <taxon>Eutheria</taxon>
        <taxon>Laurasiatheria</taxon>
        <taxon>Artiodactyla</taxon>
        <taxon>Suina</taxon>
        <taxon>Suidae</taxon>
        <taxon>Sus</taxon>
    </lineage>
</organism>
<name>DYR_PIG</name>
<dbReference type="EC" id="1.5.1.3"/>
<dbReference type="PIR" id="A00389">
    <property type="entry name" value="RDPGD"/>
</dbReference>
<dbReference type="SMR" id="P00377"/>
<dbReference type="FunCoup" id="P00377">
    <property type="interactions" value="351"/>
</dbReference>
<dbReference type="STRING" id="9823.ENSSSCP00000041285"/>
<dbReference type="PaxDb" id="9823-ENSSSCP00000015020"/>
<dbReference type="PeptideAtlas" id="P00377"/>
<dbReference type="eggNOG" id="KOG1324">
    <property type="taxonomic scope" value="Eukaryota"/>
</dbReference>
<dbReference type="InParanoid" id="P00377"/>
<dbReference type="UniPathway" id="UPA00077">
    <property type="reaction ID" value="UER00158"/>
</dbReference>
<dbReference type="Proteomes" id="UP000008227">
    <property type="component" value="Unplaced"/>
</dbReference>
<dbReference type="Proteomes" id="UP000314985">
    <property type="component" value="Unplaced"/>
</dbReference>
<dbReference type="Proteomes" id="UP000694570">
    <property type="component" value="Unplaced"/>
</dbReference>
<dbReference type="Proteomes" id="UP000694571">
    <property type="component" value="Unplaced"/>
</dbReference>
<dbReference type="Proteomes" id="UP000694720">
    <property type="component" value="Unplaced"/>
</dbReference>
<dbReference type="Proteomes" id="UP000694722">
    <property type="component" value="Unplaced"/>
</dbReference>
<dbReference type="Proteomes" id="UP000694723">
    <property type="component" value="Unplaced"/>
</dbReference>
<dbReference type="Proteomes" id="UP000694724">
    <property type="component" value="Unplaced"/>
</dbReference>
<dbReference type="Proteomes" id="UP000694725">
    <property type="component" value="Unplaced"/>
</dbReference>
<dbReference type="Proteomes" id="UP000694726">
    <property type="component" value="Unplaced"/>
</dbReference>
<dbReference type="Proteomes" id="UP000694727">
    <property type="component" value="Unplaced"/>
</dbReference>
<dbReference type="Proteomes" id="UP000694728">
    <property type="component" value="Unplaced"/>
</dbReference>
<dbReference type="GO" id="GO:0005737">
    <property type="term" value="C:cytoplasm"/>
    <property type="evidence" value="ECO:0000250"/>
    <property type="project" value="UniProtKB"/>
</dbReference>
<dbReference type="GO" id="GO:0005739">
    <property type="term" value="C:mitochondrion"/>
    <property type="evidence" value="ECO:0000250"/>
    <property type="project" value="UniProtKB"/>
</dbReference>
<dbReference type="GO" id="GO:0004146">
    <property type="term" value="F:dihydrofolate reductase activity"/>
    <property type="evidence" value="ECO:0000250"/>
    <property type="project" value="UniProtKB"/>
</dbReference>
<dbReference type="GO" id="GO:0003729">
    <property type="term" value="F:mRNA binding"/>
    <property type="evidence" value="ECO:0000250"/>
    <property type="project" value="UniProtKB"/>
</dbReference>
<dbReference type="GO" id="GO:0050661">
    <property type="term" value="F:NADP binding"/>
    <property type="evidence" value="ECO:0000318"/>
    <property type="project" value="GO_Central"/>
</dbReference>
<dbReference type="GO" id="GO:0046452">
    <property type="term" value="P:dihydrofolate metabolic process"/>
    <property type="evidence" value="ECO:0000318"/>
    <property type="project" value="GO_Central"/>
</dbReference>
<dbReference type="GO" id="GO:0046655">
    <property type="term" value="P:folic acid metabolic process"/>
    <property type="evidence" value="ECO:0000318"/>
    <property type="project" value="GO_Central"/>
</dbReference>
<dbReference type="GO" id="GO:0006730">
    <property type="term" value="P:one-carbon metabolic process"/>
    <property type="evidence" value="ECO:0007669"/>
    <property type="project" value="UniProtKB-KW"/>
</dbReference>
<dbReference type="GO" id="GO:0031427">
    <property type="term" value="P:response to methotrexate"/>
    <property type="evidence" value="ECO:0007669"/>
    <property type="project" value="UniProtKB-KW"/>
</dbReference>
<dbReference type="GO" id="GO:0046654">
    <property type="term" value="P:tetrahydrofolate biosynthetic process"/>
    <property type="evidence" value="ECO:0000318"/>
    <property type="project" value="GO_Central"/>
</dbReference>
<dbReference type="GO" id="GO:0046653">
    <property type="term" value="P:tetrahydrofolate metabolic process"/>
    <property type="evidence" value="ECO:0000250"/>
    <property type="project" value="UniProtKB"/>
</dbReference>
<dbReference type="CDD" id="cd00209">
    <property type="entry name" value="DHFR"/>
    <property type="match status" value="1"/>
</dbReference>
<dbReference type="FunFam" id="3.40.430.10:FF:000002">
    <property type="entry name" value="Dihydrofolate reductase"/>
    <property type="match status" value="1"/>
</dbReference>
<dbReference type="Gene3D" id="3.40.430.10">
    <property type="entry name" value="Dihydrofolate Reductase, subunit A"/>
    <property type="match status" value="1"/>
</dbReference>
<dbReference type="InterPro" id="IPR012259">
    <property type="entry name" value="DHFR"/>
</dbReference>
<dbReference type="InterPro" id="IPR024072">
    <property type="entry name" value="DHFR-like_dom_sf"/>
</dbReference>
<dbReference type="InterPro" id="IPR017925">
    <property type="entry name" value="DHFR_CS"/>
</dbReference>
<dbReference type="InterPro" id="IPR001796">
    <property type="entry name" value="DHFR_dom"/>
</dbReference>
<dbReference type="PANTHER" id="PTHR48069">
    <property type="entry name" value="DIHYDROFOLATE REDUCTASE"/>
    <property type="match status" value="1"/>
</dbReference>
<dbReference type="PANTHER" id="PTHR48069:SF6">
    <property type="entry name" value="DIHYDROFOLATE REDUCTASE"/>
    <property type="match status" value="1"/>
</dbReference>
<dbReference type="Pfam" id="PF00186">
    <property type="entry name" value="DHFR_1"/>
    <property type="match status" value="1"/>
</dbReference>
<dbReference type="PRINTS" id="PR00070">
    <property type="entry name" value="DHFR"/>
</dbReference>
<dbReference type="SUPFAM" id="SSF53597">
    <property type="entry name" value="Dihydrofolate reductase-like"/>
    <property type="match status" value="1"/>
</dbReference>
<dbReference type="PROSITE" id="PS00075">
    <property type="entry name" value="DHFR_1"/>
    <property type="match status" value="1"/>
</dbReference>
<dbReference type="PROSITE" id="PS51330">
    <property type="entry name" value="DHFR_2"/>
    <property type="match status" value="1"/>
</dbReference>
<proteinExistence type="evidence at protein level"/>
<keyword id="KW-0007">Acetylation</keyword>
<keyword id="KW-0963">Cytoplasm</keyword>
<keyword id="KW-0903">Direct protein sequencing</keyword>
<keyword id="KW-0487">Methotrexate resistance</keyword>
<keyword id="KW-0496">Mitochondrion</keyword>
<keyword id="KW-0521">NADP</keyword>
<keyword id="KW-0554">One-carbon metabolism</keyword>
<keyword id="KW-0560">Oxidoreductase</keyword>
<keyword id="KW-1185">Reference proteome</keyword>
<keyword id="KW-0694">RNA-binding</keyword>
<reference key="1">
    <citation type="journal article" date="1979" name="J. Biol. Chem.">
        <title>Porcine liver dihydrofolate reductase. Purification, properties, and amino acid sequence.</title>
        <authorList>
            <person name="Smith S.L."/>
            <person name="Patrick P."/>
            <person name="Stone D."/>
            <person name="Phillips A.W."/>
            <person name="Burchall J.J."/>
        </authorList>
    </citation>
    <scope>PROTEIN SEQUENCE</scope>
    <source>
        <tissue>Liver</tissue>
    </source>
</reference>
<accession>P00377</accession>
<comment type="function">
    <text evidence="1">Key enzyme in folate metabolism. Contributes to the de novo mitochondrial thymidylate biosynthesis pathway. Catalyzes an essential reaction for de novo glycine and purine synthesis, and for DNA precursor synthesis. Binds its own mRNA and that of DHFR2 (By similarity).</text>
</comment>
<comment type="catalytic activity">
    <reaction evidence="2 3">
        <text>(6S)-5,6,7,8-tetrahydrofolate + NADP(+) = 7,8-dihydrofolate + NADPH + H(+)</text>
        <dbReference type="Rhea" id="RHEA:15009"/>
        <dbReference type="ChEBI" id="CHEBI:15378"/>
        <dbReference type="ChEBI" id="CHEBI:57451"/>
        <dbReference type="ChEBI" id="CHEBI:57453"/>
        <dbReference type="ChEBI" id="CHEBI:57783"/>
        <dbReference type="ChEBI" id="CHEBI:58349"/>
        <dbReference type="EC" id="1.5.1.3"/>
    </reaction>
</comment>
<comment type="pathway">
    <text>Cofactor biosynthesis; tetrahydrofolate biosynthesis; 5,6,7,8-tetrahydrofolate from 7,8-dihydrofolate: step 1/1.</text>
</comment>
<comment type="subunit">
    <text evidence="1">Homodimer.</text>
</comment>
<comment type="subcellular location">
    <subcellularLocation>
        <location evidence="2">Mitochondrion</location>
    </subcellularLocation>
    <subcellularLocation>
        <location evidence="2">Cytoplasm</location>
    </subcellularLocation>
</comment>
<comment type="similarity">
    <text evidence="4">Belongs to the dihydrofolate reductase family.</text>
</comment>
<sequence>VRPLNCIVAVSQNMGIGKNGDLPWPPLRNEYKYFQRMTTTSSVEGKQNLVIMGRKTWFSIPEKNRPLKDRINIVLSRELKEPPQGAHFLAKSLDDALKLTEQPELKDKVDMVWIVGGSSVYKEAMNKPGHIRLFVTRIMKEFESDTFFPEIDLEKYKLLSECSGVPSDVQEEKGIKYKFEVYEKNN</sequence>